<evidence type="ECO:0000255" key="1">
    <source>
        <dbReference type="HAMAP-Rule" id="MF_00074"/>
    </source>
</evidence>
<gene>
    <name evidence="1" type="primary">rsmG</name>
    <name type="ordered locus">PA5564</name>
</gene>
<keyword id="KW-0963">Cytoplasm</keyword>
<keyword id="KW-0489">Methyltransferase</keyword>
<keyword id="KW-1185">Reference proteome</keyword>
<keyword id="KW-0698">rRNA processing</keyword>
<keyword id="KW-0949">S-adenosyl-L-methionine</keyword>
<keyword id="KW-0808">Transferase</keyword>
<proteinExistence type="inferred from homology"/>
<sequence>MSAVTQHHADELARGADELGVALDADKQRQLLAYLALLIKWNKAYNLTAVRDPDEMVSRHLLDSLSIVPYAEAGDNWLDVGSGGGMPGVPLAILFPEKRLTLLDSNGKKTRFLTQVKLELKLANLEVVHSRVEAFRPESPFDGIVSRAFSSLEDFANWTRHLGGQETRWLAMKGVHPNEELAALPEDFRVEAEHALAVPGCQGQRHLLILRRTA</sequence>
<feature type="chain" id="PRO_0000184306" description="Ribosomal RNA small subunit methyltransferase G">
    <location>
        <begin position="1"/>
        <end position="214"/>
    </location>
</feature>
<feature type="binding site" evidence="1">
    <location>
        <position position="81"/>
    </location>
    <ligand>
        <name>S-adenosyl-L-methionine</name>
        <dbReference type="ChEBI" id="CHEBI:59789"/>
    </ligand>
</feature>
<feature type="binding site" evidence="1">
    <location>
        <position position="86"/>
    </location>
    <ligand>
        <name>S-adenosyl-L-methionine</name>
        <dbReference type="ChEBI" id="CHEBI:59789"/>
    </ligand>
</feature>
<feature type="binding site" evidence="1">
    <location>
        <begin position="132"/>
        <end position="133"/>
    </location>
    <ligand>
        <name>S-adenosyl-L-methionine</name>
        <dbReference type="ChEBI" id="CHEBI:59789"/>
    </ligand>
</feature>
<feature type="binding site" evidence="1">
    <location>
        <position position="147"/>
    </location>
    <ligand>
        <name>S-adenosyl-L-methionine</name>
        <dbReference type="ChEBI" id="CHEBI:59789"/>
    </ligand>
</feature>
<comment type="function">
    <text evidence="1">Specifically methylates the N7 position of guanine in position 527 of 16S rRNA.</text>
</comment>
<comment type="catalytic activity">
    <reaction evidence="1">
        <text>guanosine(527) in 16S rRNA + S-adenosyl-L-methionine = N(7)-methylguanosine(527) in 16S rRNA + S-adenosyl-L-homocysteine</text>
        <dbReference type="Rhea" id="RHEA:42732"/>
        <dbReference type="Rhea" id="RHEA-COMP:10209"/>
        <dbReference type="Rhea" id="RHEA-COMP:10210"/>
        <dbReference type="ChEBI" id="CHEBI:57856"/>
        <dbReference type="ChEBI" id="CHEBI:59789"/>
        <dbReference type="ChEBI" id="CHEBI:74269"/>
        <dbReference type="ChEBI" id="CHEBI:74480"/>
        <dbReference type="EC" id="2.1.1.170"/>
    </reaction>
</comment>
<comment type="subcellular location">
    <subcellularLocation>
        <location evidence="1">Cytoplasm</location>
    </subcellularLocation>
</comment>
<comment type="similarity">
    <text evidence="1">Belongs to the methyltransferase superfamily. RNA methyltransferase RsmG family.</text>
</comment>
<dbReference type="EC" id="2.1.1.170" evidence="1"/>
<dbReference type="EMBL" id="AE004091">
    <property type="protein sequence ID" value="AAG08949.1"/>
    <property type="molecule type" value="Genomic_DNA"/>
</dbReference>
<dbReference type="PIR" id="C82950">
    <property type="entry name" value="C82950"/>
</dbReference>
<dbReference type="RefSeq" id="WP_003100242.1">
    <property type="nucleotide sequence ID" value="NZ_QZGE01000012.1"/>
</dbReference>
<dbReference type="SMR" id="Q9HT10"/>
<dbReference type="FunCoup" id="Q9HT10">
    <property type="interactions" value="567"/>
</dbReference>
<dbReference type="STRING" id="208964.PA5564"/>
<dbReference type="PaxDb" id="208964-PA5564"/>
<dbReference type="DNASU" id="877778"/>
<dbReference type="KEGG" id="pae:PA5564"/>
<dbReference type="PATRIC" id="fig|208964.12.peg.5830"/>
<dbReference type="PseudoCAP" id="PA5564"/>
<dbReference type="HOGENOM" id="CLU_065341_2_0_6"/>
<dbReference type="InParanoid" id="Q9HT10"/>
<dbReference type="OrthoDB" id="9808773at2"/>
<dbReference type="PhylomeDB" id="Q9HT10"/>
<dbReference type="BioCyc" id="PAER208964:G1FZ6-5691-MONOMER"/>
<dbReference type="Proteomes" id="UP000002438">
    <property type="component" value="Chromosome"/>
</dbReference>
<dbReference type="GO" id="GO:0005829">
    <property type="term" value="C:cytosol"/>
    <property type="evidence" value="ECO:0000318"/>
    <property type="project" value="GO_Central"/>
</dbReference>
<dbReference type="GO" id="GO:0070043">
    <property type="term" value="F:rRNA (guanine-N7-)-methyltransferase activity"/>
    <property type="evidence" value="ECO:0000318"/>
    <property type="project" value="GO_Central"/>
</dbReference>
<dbReference type="FunFam" id="3.40.50.150:FF:000032">
    <property type="entry name" value="Ribosomal RNA small subunit methyltransferase G"/>
    <property type="match status" value="1"/>
</dbReference>
<dbReference type="Gene3D" id="3.40.50.150">
    <property type="entry name" value="Vaccinia Virus protein VP39"/>
    <property type="match status" value="1"/>
</dbReference>
<dbReference type="HAMAP" id="MF_00074">
    <property type="entry name" value="16SrRNA_methyltr_G"/>
    <property type="match status" value="1"/>
</dbReference>
<dbReference type="InterPro" id="IPR003682">
    <property type="entry name" value="rRNA_ssu_MeTfrase_G"/>
</dbReference>
<dbReference type="InterPro" id="IPR029063">
    <property type="entry name" value="SAM-dependent_MTases_sf"/>
</dbReference>
<dbReference type="NCBIfam" id="TIGR00138">
    <property type="entry name" value="rsmG_gidB"/>
    <property type="match status" value="1"/>
</dbReference>
<dbReference type="PANTHER" id="PTHR31760">
    <property type="entry name" value="S-ADENOSYL-L-METHIONINE-DEPENDENT METHYLTRANSFERASES SUPERFAMILY PROTEIN"/>
    <property type="match status" value="1"/>
</dbReference>
<dbReference type="PANTHER" id="PTHR31760:SF0">
    <property type="entry name" value="S-ADENOSYL-L-METHIONINE-DEPENDENT METHYLTRANSFERASES SUPERFAMILY PROTEIN"/>
    <property type="match status" value="1"/>
</dbReference>
<dbReference type="Pfam" id="PF02527">
    <property type="entry name" value="GidB"/>
    <property type="match status" value="1"/>
</dbReference>
<dbReference type="PIRSF" id="PIRSF003078">
    <property type="entry name" value="GidB"/>
    <property type="match status" value="1"/>
</dbReference>
<dbReference type="SUPFAM" id="SSF53335">
    <property type="entry name" value="S-adenosyl-L-methionine-dependent methyltransferases"/>
    <property type="match status" value="1"/>
</dbReference>
<name>RSMG_PSEAE</name>
<organism>
    <name type="scientific">Pseudomonas aeruginosa (strain ATCC 15692 / DSM 22644 / CIP 104116 / JCM 14847 / LMG 12228 / 1C / PRS 101 / PAO1)</name>
    <dbReference type="NCBI Taxonomy" id="208964"/>
    <lineage>
        <taxon>Bacteria</taxon>
        <taxon>Pseudomonadati</taxon>
        <taxon>Pseudomonadota</taxon>
        <taxon>Gammaproteobacteria</taxon>
        <taxon>Pseudomonadales</taxon>
        <taxon>Pseudomonadaceae</taxon>
        <taxon>Pseudomonas</taxon>
    </lineage>
</organism>
<accession>Q9HT10</accession>
<reference key="1">
    <citation type="journal article" date="2000" name="Nature">
        <title>Complete genome sequence of Pseudomonas aeruginosa PAO1, an opportunistic pathogen.</title>
        <authorList>
            <person name="Stover C.K."/>
            <person name="Pham X.-Q.T."/>
            <person name="Erwin A.L."/>
            <person name="Mizoguchi S.D."/>
            <person name="Warrener P."/>
            <person name="Hickey M.J."/>
            <person name="Brinkman F.S.L."/>
            <person name="Hufnagle W.O."/>
            <person name="Kowalik D.J."/>
            <person name="Lagrou M."/>
            <person name="Garber R.L."/>
            <person name="Goltry L."/>
            <person name="Tolentino E."/>
            <person name="Westbrock-Wadman S."/>
            <person name="Yuan Y."/>
            <person name="Brody L.L."/>
            <person name="Coulter S.N."/>
            <person name="Folger K.R."/>
            <person name="Kas A."/>
            <person name="Larbig K."/>
            <person name="Lim R.M."/>
            <person name="Smith K.A."/>
            <person name="Spencer D.H."/>
            <person name="Wong G.K.-S."/>
            <person name="Wu Z."/>
            <person name="Paulsen I.T."/>
            <person name="Reizer J."/>
            <person name="Saier M.H. Jr."/>
            <person name="Hancock R.E.W."/>
            <person name="Lory S."/>
            <person name="Olson M.V."/>
        </authorList>
    </citation>
    <scope>NUCLEOTIDE SEQUENCE [LARGE SCALE GENOMIC DNA]</scope>
    <source>
        <strain>ATCC 15692 / DSM 22644 / CIP 104116 / JCM 14847 / LMG 12228 / 1C / PRS 101 / PAO1</strain>
    </source>
</reference>
<protein>
    <recommendedName>
        <fullName evidence="1">Ribosomal RNA small subunit methyltransferase G</fullName>
        <ecNumber evidence="1">2.1.1.170</ecNumber>
    </recommendedName>
    <alternativeName>
        <fullName evidence="1">16S rRNA 7-methylguanosine methyltransferase</fullName>
        <shortName evidence="1">16S rRNA m7G methyltransferase</shortName>
    </alternativeName>
</protein>